<evidence type="ECO:0000250" key="1"/>
<evidence type="ECO:0000250" key="2">
    <source>
        <dbReference type="UniProtKB" id="P07437"/>
    </source>
</evidence>
<evidence type="ECO:0000250" key="3">
    <source>
        <dbReference type="UniProtKB" id="P68363"/>
    </source>
</evidence>
<evidence type="ECO:0000250" key="4">
    <source>
        <dbReference type="UniProtKB" id="P99024"/>
    </source>
</evidence>
<evidence type="ECO:0000250" key="5">
    <source>
        <dbReference type="UniProtKB" id="Q13509"/>
    </source>
</evidence>
<evidence type="ECO:0000250" key="6">
    <source>
        <dbReference type="UniProtKB" id="Q13885"/>
    </source>
</evidence>
<evidence type="ECO:0000250" key="7">
    <source>
        <dbReference type="UniProtKB" id="Q2T9S0"/>
    </source>
</evidence>
<evidence type="ECO:0000250" key="8">
    <source>
        <dbReference type="UniProtKB" id="Q71U36"/>
    </source>
</evidence>
<evidence type="ECO:0000256" key="9">
    <source>
        <dbReference type="SAM" id="MobiDB-lite"/>
    </source>
</evidence>
<evidence type="ECO:0000269" key="10">
    <source>
    </source>
</evidence>
<evidence type="ECO:0000269" key="11">
    <source>
    </source>
</evidence>
<evidence type="ECO:0000269" key="12">
    <source>
    </source>
</evidence>
<evidence type="ECO:0000269" key="13">
    <source>
    </source>
</evidence>
<evidence type="ECO:0000269" key="14">
    <source>
    </source>
</evidence>
<evidence type="ECO:0000305" key="15"/>
<comment type="function">
    <text>Tubulin is the major constituent of microtubules, a cylinder consisting of laterally associated linear protofilaments composed of alpha- and beta-tubulin heterodimers. Microtubules grow by the addition of GTP-tubulin dimers to the microtubule end, where a stabilizing cap forms. Below the cap, tubulin dimers are in GDP-bound state, owing to GTPase activity of alpha-tubulin.</text>
</comment>
<comment type="cofactor">
    <cofactor evidence="3">
        <name>Mg(2+)</name>
        <dbReference type="ChEBI" id="CHEBI:18420"/>
    </cofactor>
</comment>
<comment type="subunit">
    <text evidence="1 12">Part of a complex composed at least of ASH2L, EMSY, HCFC1, HSPA8, CCAR2, MATR3, MKI67, RBBP5, TUBB2A, WDR5 and ZNF335; this complex may have a histone H3-specific methyltransferase activity (By similarity). Dimer of alpha and beta chains. A typical microtubule is a hollow water-filled tube with an outer diameter of 25 nm and an inner diameter of 15 nM. Alpha-beta heterodimers associate head-to-tail to form protofilaments running lengthwise along the microtubule wall with the beta-tubulin subunit facing the microtubule plus end conferring a structural polarity. Microtubules usually have 13 protofilaments but different protofilament numbers can be found in some organisms and specialized cells. Interacts with ZNRF1.</text>
</comment>
<comment type="subcellular location">
    <subcellularLocation>
        <location evidence="1">Cytoplasm</location>
        <location evidence="1">Cytoskeleton</location>
    </subcellularLocation>
</comment>
<comment type="domain">
    <text evidence="2">The MREI motif is common among all beta-tubulin isoforms and may be critical for tubulin autoregulation.</text>
</comment>
<comment type="PTM">
    <text evidence="11 13 14">Some glutamate residues at the C-terminus are polyglycylated, resulting in polyglycine chains on the gamma-carboxyl group. Glycylation is mainly limited to tubulin incorporated into axonemes (cilia and flagella) whereas glutamylation is prevalent in neuronal cells, centrioles, axonemes, and the mitotic spindle. Both modifications can coexist on the same protein on adjacent residues, and lowering polyglycylation levels increases polyglutamylation, and reciprocally. Cilia and flagella glycylation is required for their stability and maintenance. Flagella glycylation controls sperm motility (PubMed:33414192).</text>
</comment>
<comment type="PTM">
    <text evidence="8 10 13">Some glutamate residues at the C-terminus are polyglutamylated, resulting in polyglutamate chains on the gamma-carboxyl group (PubMed:15890843). Polyglutamylation plays a key role in microtubule severing by spastin (SPAST). SPAST preferentially recognizes and acts on microtubules decorated with short polyglutamate tails: severing activity by SPAST increases as the number of glutamates per tubulin rises from one to eight, but decreases beyond this glutamylation threshold (By similarity). Glutamylation is also involved in cilia motility (PubMed:23897886).</text>
</comment>
<comment type="PTM">
    <text evidence="6">Phosphorylated on Ser-172 by CDK1 during the cell cycle, from metaphase to telophase, but not in interphase. This phosphorylation inhibits tubulin incorporation into microtubules.</text>
</comment>
<comment type="similarity">
    <text evidence="15">Belongs to the tubulin family.</text>
</comment>
<proteinExistence type="evidence at protein level"/>
<keyword id="KW-0002">3D-structure</keyword>
<keyword id="KW-0007">Acetylation</keyword>
<keyword id="KW-0963">Cytoplasm</keyword>
<keyword id="KW-0206">Cytoskeleton</keyword>
<keyword id="KW-0903">Direct protein sequencing</keyword>
<keyword id="KW-0342">GTP-binding</keyword>
<keyword id="KW-1017">Isopeptide bond</keyword>
<keyword id="KW-0460">Magnesium</keyword>
<keyword id="KW-0479">Metal-binding</keyword>
<keyword id="KW-0488">Methylation</keyword>
<keyword id="KW-0493">Microtubule</keyword>
<keyword id="KW-0547">Nucleotide-binding</keyword>
<keyword id="KW-0597">Phosphoprotein</keyword>
<keyword id="KW-1185">Reference proteome</keyword>
<keyword id="KW-0832">Ubl conjugation</keyword>
<name>TBB2A_MOUSE</name>
<reference key="1">
    <citation type="journal article" date="2005" name="Science">
        <title>The transcriptional landscape of the mammalian genome.</title>
        <authorList>
            <person name="Carninci P."/>
            <person name="Kasukawa T."/>
            <person name="Katayama S."/>
            <person name="Gough J."/>
            <person name="Frith M.C."/>
            <person name="Maeda N."/>
            <person name="Oyama R."/>
            <person name="Ravasi T."/>
            <person name="Lenhard B."/>
            <person name="Wells C."/>
            <person name="Kodzius R."/>
            <person name="Shimokawa K."/>
            <person name="Bajic V.B."/>
            <person name="Brenner S.E."/>
            <person name="Batalov S."/>
            <person name="Forrest A.R."/>
            <person name="Zavolan M."/>
            <person name="Davis M.J."/>
            <person name="Wilming L.G."/>
            <person name="Aidinis V."/>
            <person name="Allen J.E."/>
            <person name="Ambesi-Impiombato A."/>
            <person name="Apweiler R."/>
            <person name="Aturaliya R.N."/>
            <person name="Bailey T.L."/>
            <person name="Bansal M."/>
            <person name="Baxter L."/>
            <person name="Beisel K.W."/>
            <person name="Bersano T."/>
            <person name="Bono H."/>
            <person name="Chalk A.M."/>
            <person name="Chiu K.P."/>
            <person name="Choudhary V."/>
            <person name="Christoffels A."/>
            <person name="Clutterbuck D.R."/>
            <person name="Crowe M.L."/>
            <person name="Dalla E."/>
            <person name="Dalrymple B.P."/>
            <person name="de Bono B."/>
            <person name="Della Gatta G."/>
            <person name="di Bernardo D."/>
            <person name="Down T."/>
            <person name="Engstrom P."/>
            <person name="Fagiolini M."/>
            <person name="Faulkner G."/>
            <person name="Fletcher C.F."/>
            <person name="Fukushima T."/>
            <person name="Furuno M."/>
            <person name="Futaki S."/>
            <person name="Gariboldi M."/>
            <person name="Georgii-Hemming P."/>
            <person name="Gingeras T.R."/>
            <person name="Gojobori T."/>
            <person name="Green R.E."/>
            <person name="Gustincich S."/>
            <person name="Harbers M."/>
            <person name="Hayashi Y."/>
            <person name="Hensch T.K."/>
            <person name="Hirokawa N."/>
            <person name="Hill D."/>
            <person name="Huminiecki L."/>
            <person name="Iacono M."/>
            <person name="Ikeo K."/>
            <person name="Iwama A."/>
            <person name="Ishikawa T."/>
            <person name="Jakt M."/>
            <person name="Kanapin A."/>
            <person name="Katoh M."/>
            <person name="Kawasawa Y."/>
            <person name="Kelso J."/>
            <person name="Kitamura H."/>
            <person name="Kitano H."/>
            <person name="Kollias G."/>
            <person name="Krishnan S.P."/>
            <person name="Kruger A."/>
            <person name="Kummerfeld S.K."/>
            <person name="Kurochkin I.V."/>
            <person name="Lareau L.F."/>
            <person name="Lazarevic D."/>
            <person name="Lipovich L."/>
            <person name="Liu J."/>
            <person name="Liuni S."/>
            <person name="McWilliam S."/>
            <person name="Madan Babu M."/>
            <person name="Madera M."/>
            <person name="Marchionni L."/>
            <person name="Matsuda H."/>
            <person name="Matsuzawa S."/>
            <person name="Miki H."/>
            <person name="Mignone F."/>
            <person name="Miyake S."/>
            <person name="Morris K."/>
            <person name="Mottagui-Tabar S."/>
            <person name="Mulder N."/>
            <person name="Nakano N."/>
            <person name="Nakauchi H."/>
            <person name="Ng P."/>
            <person name="Nilsson R."/>
            <person name="Nishiguchi S."/>
            <person name="Nishikawa S."/>
            <person name="Nori F."/>
            <person name="Ohara O."/>
            <person name="Okazaki Y."/>
            <person name="Orlando V."/>
            <person name="Pang K.C."/>
            <person name="Pavan W.J."/>
            <person name="Pavesi G."/>
            <person name="Pesole G."/>
            <person name="Petrovsky N."/>
            <person name="Piazza S."/>
            <person name="Reed J."/>
            <person name="Reid J.F."/>
            <person name="Ring B.Z."/>
            <person name="Ringwald M."/>
            <person name="Rost B."/>
            <person name="Ruan Y."/>
            <person name="Salzberg S.L."/>
            <person name="Sandelin A."/>
            <person name="Schneider C."/>
            <person name="Schoenbach C."/>
            <person name="Sekiguchi K."/>
            <person name="Semple C.A."/>
            <person name="Seno S."/>
            <person name="Sessa L."/>
            <person name="Sheng Y."/>
            <person name="Shibata Y."/>
            <person name="Shimada H."/>
            <person name="Shimada K."/>
            <person name="Silva D."/>
            <person name="Sinclair B."/>
            <person name="Sperling S."/>
            <person name="Stupka E."/>
            <person name="Sugiura K."/>
            <person name="Sultana R."/>
            <person name="Takenaka Y."/>
            <person name="Taki K."/>
            <person name="Tammoja K."/>
            <person name="Tan S.L."/>
            <person name="Tang S."/>
            <person name="Taylor M.S."/>
            <person name="Tegner J."/>
            <person name="Teichmann S.A."/>
            <person name="Ueda H.R."/>
            <person name="van Nimwegen E."/>
            <person name="Verardo R."/>
            <person name="Wei C.L."/>
            <person name="Yagi K."/>
            <person name="Yamanishi H."/>
            <person name="Zabarovsky E."/>
            <person name="Zhu S."/>
            <person name="Zimmer A."/>
            <person name="Hide W."/>
            <person name="Bult C."/>
            <person name="Grimmond S.M."/>
            <person name="Teasdale R.D."/>
            <person name="Liu E.T."/>
            <person name="Brusic V."/>
            <person name="Quackenbush J."/>
            <person name="Wahlestedt C."/>
            <person name="Mattick J.S."/>
            <person name="Hume D.A."/>
            <person name="Kai C."/>
            <person name="Sasaki D."/>
            <person name="Tomaru Y."/>
            <person name="Fukuda S."/>
            <person name="Kanamori-Katayama M."/>
            <person name="Suzuki M."/>
            <person name="Aoki J."/>
            <person name="Arakawa T."/>
            <person name="Iida J."/>
            <person name="Imamura K."/>
            <person name="Itoh M."/>
            <person name="Kato T."/>
            <person name="Kawaji H."/>
            <person name="Kawagashira N."/>
            <person name="Kawashima T."/>
            <person name="Kojima M."/>
            <person name="Kondo S."/>
            <person name="Konno H."/>
            <person name="Nakano K."/>
            <person name="Ninomiya N."/>
            <person name="Nishio T."/>
            <person name="Okada M."/>
            <person name="Plessy C."/>
            <person name="Shibata K."/>
            <person name="Shiraki T."/>
            <person name="Suzuki S."/>
            <person name="Tagami M."/>
            <person name="Waki K."/>
            <person name="Watahiki A."/>
            <person name="Okamura-Oho Y."/>
            <person name="Suzuki H."/>
            <person name="Kawai J."/>
            <person name="Hayashizaki Y."/>
        </authorList>
    </citation>
    <scope>NUCLEOTIDE SEQUENCE [LARGE SCALE MRNA]</scope>
    <source>
        <strain>C57BL/6J</strain>
        <tissue>Medulla oblongata</tissue>
    </source>
</reference>
<reference key="2">
    <citation type="journal article" date="2004" name="Genome Res.">
        <title>The status, quality, and expansion of the NIH full-length cDNA project: the Mammalian Gene Collection (MGC).</title>
        <authorList>
            <consortium name="The MGC Project Team"/>
        </authorList>
    </citation>
    <scope>NUCLEOTIDE SEQUENCE [LARGE SCALE MRNA]</scope>
    <source>
        <strain>Czech II</strain>
        <tissue>Mammary tumor</tissue>
    </source>
</reference>
<reference key="3">
    <citation type="submission" date="2009-01" db="UniProtKB">
        <authorList>
            <person name="Lubec G."/>
            <person name="Yang J.W."/>
            <person name="Zigmond M."/>
            <person name="Sunyer B."/>
            <person name="Chen W.-Q."/>
        </authorList>
    </citation>
    <scope>PROTEIN SEQUENCE OF 104-121; 253-262 AND 381-390</scope>
    <scope>IDENTIFICATION BY MASS SPECTROMETRY</scope>
    <source>
        <strain>OF1</strain>
        <tissue>Brain</tissue>
        <tissue>Hippocampus</tissue>
    </source>
</reference>
<reference key="4">
    <citation type="journal article" date="2005" name="Science">
        <title>Tubulin polyglutamylase enzymes are members of the TTL domain protein family.</title>
        <authorList>
            <person name="Janke C."/>
            <person name="Rogowski K."/>
            <person name="Wloga D."/>
            <person name="Regnard C."/>
            <person name="Kajava A.V."/>
            <person name="Strub J.-M."/>
            <person name="Temurak N."/>
            <person name="van Dijk J."/>
            <person name="Boucher D."/>
            <person name="van Dorsselaer A."/>
            <person name="Suryavanshi S."/>
            <person name="Gaertig J."/>
            <person name="Edde B."/>
        </authorList>
    </citation>
    <scope>GLUTAMYLATION</scope>
</reference>
<reference key="5">
    <citation type="journal article" date="2009" name="Cell">
        <title>Evolutionary divergence of enzymatic mechanisms for posttranslational polyglycylation.</title>
        <authorList>
            <person name="Rogowski K."/>
            <person name="Juge F."/>
            <person name="van Dijk J."/>
            <person name="Wloga D."/>
            <person name="Strub J.-M."/>
            <person name="Levilliers N."/>
            <person name="Thomas D."/>
            <person name="Bre M.-H."/>
            <person name="Van Dorsselaer A."/>
            <person name="Gaertig J."/>
            <person name="Janke C."/>
        </authorList>
    </citation>
    <scope>GLYCYLATION</scope>
</reference>
<reference key="6">
    <citation type="journal article" date="2009" name="Biochem. Biophys. Res. Commun.">
        <title>ZNRF1 interacts with tubulin and regulates cell morphogenesis.</title>
        <authorList>
            <person name="Yoshida K."/>
            <person name="Watanabe M."/>
            <person name="Hatakeyama S."/>
        </authorList>
    </citation>
    <scope>INTERACTION WITH ZNRF1</scope>
</reference>
<reference key="7">
    <citation type="journal article" date="2010" name="Cell">
        <title>A tissue-specific atlas of mouse protein phosphorylation and expression.</title>
        <authorList>
            <person name="Huttlin E.L."/>
            <person name="Jedrychowski M.P."/>
            <person name="Elias J.E."/>
            <person name="Goswami T."/>
            <person name="Rad R."/>
            <person name="Beausoleil S.A."/>
            <person name="Villen J."/>
            <person name="Haas W."/>
            <person name="Sowa M.E."/>
            <person name="Gygi S.P."/>
        </authorList>
    </citation>
    <scope>IDENTIFICATION BY MASS SPECTROMETRY [LARGE SCALE ANALYSIS]</scope>
    <source>
        <tissue>Brain</tissue>
        <tissue>Brown adipose tissue</tissue>
        <tissue>Heart</tissue>
        <tissue>Kidney</tissue>
        <tissue>Liver</tissue>
        <tissue>Lung</tissue>
        <tissue>Pancreas</tissue>
        <tissue>Spleen</tissue>
        <tissue>Testis</tissue>
    </source>
</reference>
<reference key="8">
    <citation type="journal article" date="2013" name="J. Cell Biol.">
        <title>Tubulin glycylases and glutamylases have distinct functions in stabilization and motility of ependymal cilia.</title>
        <authorList>
            <person name="Bosch Grau M."/>
            <person name="Gonzalez Curto G."/>
            <person name="Rocha C."/>
            <person name="Magiera M.M."/>
            <person name="Marques Sousa P."/>
            <person name="Giordano T."/>
            <person name="Spassky N."/>
            <person name="Janke C."/>
        </authorList>
    </citation>
    <scope>GLYCYLATION</scope>
    <scope>GLUTAMYLATION</scope>
</reference>
<reference key="9">
    <citation type="journal article" date="2021" name="Science">
        <title>Tubulin glycylation controls axonemal dynein activity, flagellar beat, and male fertility.</title>
        <authorList>
            <person name="Gadadhar S."/>
            <person name="Alvarez Viar G."/>
            <person name="Hansen J.N."/>
            <person name="Gong A."/>
            <person name="Kostarev A."/>
            <person name="Ialy-Radio C."/>
            <person name="Leboucher S."/>
            <person name="Whitfield M."/>
            <person name="Ziyyat A."/>
            <person name="Toure A."/>
            <person name="Alvarez L."/>
            <person name="Pigino G."/>
            <person name="Janke C."/>
        </authorList>
    </citation>
    <scope>GLYCYLATION</scope>
</reference>
<organism>
    <name type="scientific">Mus musculus</name>
    <name type="common">Mouse</name>
    <dbReference type="NCBI Taxonomy" id="10090"/>
    <lineage>
        <taxon>Eukaryota</taxon>
        <taxon>Metazoa</taxon>
        <taxon>Chordata</taxon>
        <taxon>Craniata</taxon>
        <taxon>Vertebrata</taxon>
        <taxon>Euteleostomi</taxon>
        <taxon>Mammalia</taxon>
        <taxon>Eutheria</taxon>
        <taxon>Euarchontoglires</taxon>
        <taxon>Glires</taxon>
        <taxon>Rodentia</taxon>
        <taxon>Myomorpha</taxon>
        <taxon>Muroidea</taxon>
        <taxon>Muridae</taxon>
        <taxon>Murinae</taxon>
        <taxon>Mus</taxon>
        <taxon>Mus</taxon>
    </lineage>
</organism>
<accession>Q7TMM9</accession>
<sequence length="445" mass="49907">MREIVHIQAGQCGNQIGAKFWEVISDEHGIDPTGSYHGDSDLQLERINVYYNEAAGNKYVPRAILVDLEPGTMDSVRSGPFGQIFRPDNFVFGQSGAGNNWAKGHYTEGAELVDSVLDVVRKESESCDCLQGFQLTHSLGGGTGSGMGTLLISKIREEYPDRIMNTFSVMPSPKVSDTVVEPYNATLSVHQLVENTDETYSIDNEALYDICFRTLKLTTPTYGDLNHLVSATMSGVTTCLRFPGQLNADLRKLAVNMVPFPRLHFFMPGFAPLTSRGSQQYRALTVPELTQQMFDSKNMMAACDPRHGRYLTVAAIFRGRMSMKEVDEQMLNVQNKNSSYFVEWIPNNVKTAVCDIPPRGLKMSATFIGNSTAIQELFKRISEQFTAMFRRKAFLHWYTGEGMDEMEFTEAESNMNDLVSEYQQYQDATADEQGEFEEEEGEDEA</sequence>
<dbReference type="EMBL" id="AK134545">
    <property type="protein sequence ID" value="BAE22178.1"/>
    <property type="molecule type" value="mRNA"/>
</dbReference>
<dbReference type="EMBL" id="BC055441">
    <property type="protein sequence ID" value="AAH55441.1"/>
    <property type="molecule type" value="mRNA"/>
</dbReference>
<dbReference type="CCDS" id="CCDS26444.1"/>
<dbReference type="RefSeq" id="NP_033476.1">
    <property type="nucleotide sequence ID" value="NM_009450.2"/>
</dbReference>
<dbReference type="PDB" id="8IXA">
    <property type="method" value="EM"/>
    <property type="resolution" value="4.20 A"/>
    <property type="chains" value="J/K/L/M/N/O/P/Q/R=1-445"/>
</dbReference>
<dbReference type="PDB" id="8IXB">
    <property type="method" value="EM"/>
    <property type="resolution" value="4.20 A"/>
    <property type="chains" value="Q/U/V/W=1-445"/>
</dbReference>
<dbReference type="PDB" id="8IXD">
    <property type="method" value="EM"/>
    <property type="resolution" value="4.40 A"/>
    <property type="chains" value="J/K/L/M/N/O/P/Q/R=1-445"/>
</dbReference>
<dbReference type="PDB" id="8IXE">
    <property type="method" value="EM"/>
    <property type="resolution" value="4.40 A"/>
    <property type="chains" value="R/W/Z/a=1-445"/>
</dbReference>
<dbReference type="PDB" id="8IXF">
    <property type="method" value="EM"/>
    <property type="resolution" value="4.40 A"/>
    <property type="chains" value="J/K/L/M/N/O/P/Q/R=1-445"/>
</dbReference>
<dbReference type="PDB" id="8IXG">
    <property type="method" value="EM"/>
    <property type="resolution" value="4.40 A"/>
    <property type="chains" value="R/W/Z/a=1-445"/>
</dbReference>
<dbReference type="PDBsum" id="8IXA"/>
<dbReference type="PDBsum" id="8IXB"/>
<dbReference type="PDBsum" id="8IXD"/>
<dbReference type="PDBsum" id="8IXE"/>
<dbReference type="PDBsum" id="8IXF"/>
<dbReference type="PDBsum" id="8IXG"/>
<dbReference type="EMDB" id="EMD-35790"/>
<dbReference type="EMDB" id="EMD-35791"/>
<dbReference type="EMDB" id="EMD-35792"/>
<dbReference type="SMR" id="Q7TMM9"/>
<dbReference type="BioGRID" id="204378">
    <property type="interactions" value="37"/>
</dbReference>
<dbReference type="CORUM" id="Q7TMM9"/>
<dbReference type="FunCoup" id="Q7TMM9">
    <property type="interactions" value="1315"/>
</dbReference>
<dbReference type="IntAct" id="Q7TMM9">
    <property type="interactions" value="14"/>
</dbReference>
<dbReference type="MINT" id="Q7TMM9"/>
<dbReference type="STRING" id="10090.ENSMUSP00000060246"/>
<dbReference type="GlyGen" id="Q7TMM9">
    <property type="glycosylation" value="6 sites, 2 N-linked glycans (2 sites), 1 O-linked glycan (4 sites)"/>
</dbReference>
<dbReference type="iPTMnet" id="Q7TMM9"/>
<dbReference type="MetOSite" id="Q7TMM9"/>
<dbReference type="PhosphoSitePlus" id="Q7TMM9"/>
<dbReference type="SwissPalm" id="Q7TMM9"/>
<dbReference type="jPOST" id="Q7TMM9"/>
<dbReference type="PaxDb" id="10090-ENSMUSP00000060246"/>
<dbReference type="PeptideAtlas" id="Q7TMM9"/>
<dbReference type="ProteomicsDB" id="254821"/>
<dbReference type="Pumba" id="Q7TMM9"/>
<dbReference type="Antibodypedia" id="9372">
    <property type="antibodies" value="385 antibodies from 31 providers"/>
</dbReference>
<dbReference type="DNASU" id="22151"/>
<dbReference type="Ensembl" id="ENSMUST00000056427.10">
    <property type="protein sequence ID" value="ENSMUSP00000060246.9"/>
    <property type="gene ID" value="ENSMUSG00000058672.8"/>
</dbReference>
<dbReference type="GeneID" id="22151"/>
<dbReference type="KEGG" id="mmu:22151"/>
<dbReference type="UCSC" id="uc007qbb.3">
    <property type="organism name" value="mouse"/>
</dbReference>
<dbReference type="AGR" id="MGI:107861"/>
<dbReference type="CTD" id="7280"/>
<dbReference type="MGI" id="MGI:107861">
    <property type="gene designation" value="Tubb2a"/>
</dbReference>
<dbReference type="VEuPathDB" id="HostDB:ENSMUSG00000058672"/>
<dbReference type="eggNOG" id="KOG1375">
    <property type="taxonomic scope" value="Eukaryota"/>
</dbReference>
<dbReference type="GeneTree" id="ENSGT00940000154150"/>
<dbReference type="HOGENOM" id="CLU_015718_1_1_1"/>
<dbReference type="InParanoid" id="Q7TMM9"/>
<dbReference type="OMA" id="DQMRSIQ"/>
<dbReference type="OrthoDB" id="9569079at2759"/>
<dbReference type="PhylomeDB" id="Q7TMM9"/>
<dbReference type="TreeFam" id="TF300298"/>
<dbReference type="Reactome" id="R-MMU-190840">
    <property type="pathway name" value="Microtubule-dependent trafficking of connexons from Golgi to the plasma membrane"/>
</dbReference>
<dbReference type="Reactome" id="R-MMU-2132295">
    <property type="pathway name" value="MHC class II antigen presentation"/>
</dbReference>
<dbReference type="Reactome" id="R-MMU-2467813">
    <property type="pathway name" value="Separation of Sister Chromatids"/>
</dbReference>
<dbReference type="Reactome" id="R-MMU-2500257">
    <property type="pathway name" value="Resolution of Sister Chromatid Cohesion"/>
</dbReference>
<dbReference type="Reactome" id="R-MMU-3371497">
    <property type="pathway name" value="HSP90 chaperone cycle for steroid hormone receptors (SHR) in the presence of ligand"/>
</dbReference>
<dbReference type="Reactome" id="R-MMU-380320">
    <property type="pathway name" value="Recruitment of NuMA to mitotic centrosomes"/>
</dbReference>
<dbReference type="Reactome" id="R-MMU-437239">
    <property type="pathway name" value="Recycling pathway of L1"/>
</dbReference>
<dbReference type="Reactome" id="R-MMU-5610787">
    <property type="pathway name" value="Hedgehog 'off' state"/>
</dbReference>
<dbReference type="Reactome" id="R-MMU-5617833">
    <property type="pathway name" value="Cilium Assembly"/>
</dbReference>
<dbReference type="Reactome" id="R-MMU-5620924">
    <property type="pathway name" value="Intraflagellar transport"/>
</dbReference>
<dbReference type="Reactome" id="R-MMU-5626467">
    <property type="pathway name" value="RHO GTPases activate IQGAPs"/>
</dbReference>
<dbReference type="Reactome" id="R-MMU-5663220">
    <property type="pathway name" value="RHO GTPases Activate Formins"/>
</dbReference>
<dbReference type="Reactome" id="R-MMU-6807878">
    <property type="pathway name" value="COPI-mediated anterograde transport"/>
</dbReference>
<dbReference type="Reactome" id="R-MMU-6811434">
    <property type="pathway name" value="COPI-dependent Golgi-to-ER retrograde traffic"/>
</dbReference>
<dbReference type="Reactome" id="R-MMU-6811436">
    <property type="pathway name" value="COPI-independent Golgi-to-ER retrograde traffic"/>
</dbReference>
<dbReference type="Reactome" id="R-MMU-68877">
    <property type="pathway name" value="Mitotic Prometaphase"/>
</dbReference>
<dbReference type="Reactome" id="R-MMU-8852276">
    <property type="pathway name" value="The role of GTSE1 in G2/M progression after G2 checkpoint"/>
</dbReference>
<dbReference type="Reactome" id="R-MMU-8955332">
    <property type="pathway name" value="Carboxyterminal post-translational modifications of tubulin"/>
</dbReference>
<dbReference type="Reactome" id="R-MMU-9646399">
    <property type="pathway name" value="Aggrephagy"/>
</dbReference>
<dbReference type="Reactome" id="R-MMU-9648025">
    <property type="pathway name" value="EML4 and NUDC in mitotic spindle formation"/>
</dbReference>
<dbReference type="Reactome" id="R-MMU-9668328">
    <property type="pathway name" value="Sealing of the nuclear envelope (NE) by ESCRT-III"/>
</dbReference>
<dbReference type="Reactome" id="R-MMU-983189">
    <property type="pathway name" value="Kinesins"/>
</dbReference>
<dbReference type="Reactome" id="R-MMU-9833482">
    <property type="pathway name" value="PKR-mediated signaling"/>
</dbReference>
<dbReference type="BioGRID-ORCS" id="22151">
    <property type="hits" value="4 hits in 77 CRISPR screens"/>
</dbReference>
<dbReference type="CD-CODE" id="CE726F99">
    <property type="entry name" value="Postsynaptic density"/>
</dbReference>
<dbReference type="ChiTaRS" id="Tubb2a">
    <property type="organism name" value="mouse"/>
</dbReference>
<dbReference type="PRO" id="PR:Q7TMM9"/>
<dbReference type="Proteomes" id="UP000000589">
    <property type="component" value="Chromosome 13"/>
</dbReference>
<dbReference type="RNAct" id="Q7TMM9">
    <property type="molecule type" value="protein"/>
</dbReference>
<dbReference type="Bgee" id="ENSMUSG00000058672">
    <property type="expression patterns" value="Expressed in barrel cortex and 245 other cell types or tissues"/>
</dbReference>
<dbReference type="GO" id="GO:0005737">
    <property type="term" value="C:cytoplasm"/>
    <property type="evidence" value="ECO:0007669"/>
    <property type="project" value="UniProtKB-KW"/>
</dbReference>
<dbReference type="GO" id="GO:0045171">
    <property type="term" value="C:intercellular bridge"/>
    <property type="evidence" value="ECO:0007669"/>
    <property type="project" value="Ensembl"/>
</dbReference>
<dbReference type="GO" id="GO:0005874">
    <property type="term" value="C:microtubule"/>
    <property type="evidence" value="ECO:0007669"/>
    <property type="project" value="UniProtKB-KW"/>
</dbReference>
<dbReference type="GO" id="GO:0072686">
    <property type="term" value="C:mitotic spindle"/>
    <property type="evidence" value="ECO:0007669"/>
    <property type="project" value="Ensembl"/>
</dbReference>
<dbReference type="GO" id="GO:0005525">
    <property type="term" value="F:GTP binding"/>
    <property type="evidence" value="ECO:0007669"/>
    <property type="project" value="UniProtKB-KW"/>
</dbReference>
<dbReference type="GO" id="GO:0003924">
    <property type="term" value="F:GTPase activity"/>
    <property type="evidence" value="ECO:0007669"/>
    <property type="project" value="InterPro"/>
</dbReference>
<dbReference type="GO" id="GO:0046872">
    <property type="term" value="F:metal ion binding"/>
    <property type="evidence" value="ECO:0007669"/>
    <property type="project" value="UniProtKB-KW"/>
</dbReference>
<dbReference type="GO" id="GO:0005200">
    <property type="term" value="F:structural constituent of cytoskeleton"/>
    <property type="evidence" value="ECO:0007669"/>
    <property type="project" value="InterPro"/>
</dbReference>
<dbReference type="GO" id="GO:0021987">
    <property type="term" value="P:cerebral cortex development"/>
    <property type="evidence" value="ECO:0000315"/>
    <property type="project" value="MGI"/>
</dbReference>
<dbReference type="GO" id="GO:0007017">
    <property type="term" value="P:microtubule-based process"/>
    <property type="evidence" value="ECO:0007669"/>
    <property type="project" value="InterPro"/>
</dbReference>
<dbReference type="CDD" id="cd02187">
    <property type="entry name" value="beta_tubulin"/>
    <property type="match status" value="1"/>
</dbReference>
<dbReference type="FunFam" id="1.10.287.600:FF:000006">
    <property type="entry name" value="Tubulin beta chain"/>
    <property type="match status" value="1"/>
</dbReference>
<dbReference type="FunFam" id="3.30.1330.20:FF:000002">
    <property type="entry name" value="Tubulin beta chain"/>
    <property type="match status" value="1"/>
</dbReference>
<dbReference type="FunFam" id="3.40.50.1440:FF:000003">
    <property type="entry name" value="Tubulin beta chain"/>
    <property type="match status" value="1"/>
</dbReference>
<dbReference type="Gene3D" id="1.10.287.600">
    <property type="entry name" value="Helix hairpin bin"/>
    <property type="match status" value="1"/>
</dbReference>
<dbReference type="Gene3D" id="3.30.1330.20">
    <property type="entry name" value="Tubulin/FtsZ, C-terminal domain"/>
    <property type="match status" value="1"/>
</dbReference>
<dbReference type="Gene3D" id="3.40.50.1440">
    <property type="entry name" value="Tubulin/FtsZ, GTPase domain"/>
    <property type="match status" value="1"/>
</dbReference>
<dbReference type="InterPro" id="IPR013838">
    <property type="entry name" value="Beta-tubulin_BS"/>
</dbReference>
<dbReference type="InterPro" id="IPR002453">
    <property type="entry name" value="Beta_tubulin"/>
</dbReference>
<dbReference type="InterPro" id="IPR008280">
    <property type="entry name" value="Tub_FtsZ_C"/>
</dbReference>
<dbReference type="InterPro" id="IPR000217">
    <property type="entry name" value="Tubulin"/>
</dbReference>
<dbReference type="InterPro" id="IPR037103">
    <property type="entry name" value="Tubulin/FtsZ-like_C"/>
</dbReference>
<dbReference type="InterPro" id="IPR018316">
    <property type="entry name" value="Tubulin/FtsZ_2-layer-sand-dom"/>
</dbReference>
<dbReference type="InterPro" id="IPR036525">
    <property type="entry name" value="Tubulin/FtsZ_GTPase_sf"/>
</dbReference>
<dbReference type="InterPro" id="IPR023123">
    <property type="entry name" value="Tubulin_C"/>
</dbReference>
<dbReference type="InterPro" id="IPR017975">
    <property type="entry name" value="Tubulin_CS"/>
</dbReference>
<dbReference type="InterPro" id="IPR003008">
    <property type="entry name" value="Tubulin_FtsZ_GTPase"/>
</dbReference>
<dbReference type="PANTHER" id="PTHR11588">
    <property type="entry name" value="TUBULIN"/>
    <property type="match status" value="1"/>
</dbReference>
<dbReference type="Pfam" id="PF00091">
    <property type="entry name" value="Tubulin"/>
    <property type="match status" value="1"/>
</dbReference>
<dbReference type="Pfam" id="PF03953">
    <property type="entry name" value="Tubulin_C"/>
    <property type="match status" value="1"/>
</dbReference>
<dbReference type="PRINTS" id="PR01163">
    <property type="entry name" value="BETATUBULIN"/>
</dbReference>
<dbReference type="PRINTS" id="PR01161">
    <property type="entry name" value="TUBULIN"/>
</dbReference>
<dbReference type="SMART" id="SM00864">
    <property type="entry name" value="Tubulin"/>
    <property type="match status" value="1"/>
</dbReference>
<dbReference type="SMART" id="SM00865">
    <property type="entry name" value="Tubulin_C"/>
    <property type="match status" value="1"/>
</dbReference>
<dbReference type="SUPFAM" id="SSF55307">
    <property type="entry name" value="Tubulin C-terminal domain-like"/>
    <property type="match status" value="1"/>
</dbReference>
<dbReference type="SUPFAM" id="SSF52490">
    <property type="entry name" value="Tubulin nucleotide-binding domain-like"/>
    <property type="match status" value="1"/>
</dbReference>
<dbReference type="PROSITE" id="PS00227">
    <property type="entry name" value="TUBULIN"/>
    <property type="match status" value="1"/>
</dbReference>
<dbReference type="PROSITE" id="PS00228">
    <property type="entry name" value="TUBULIN_B_AUTOREG"/>
    <property type="match status" value="1"/>
</dbReference>
<protein>
    <recommendedName>
        <fullName>Tubulin beta-2A chain</fullName>
    </recommendedName>
</protein>
<gene>
    <name type="primary">Tubb2a</name>
    <name type="synonym">Tubb2</name>
</gene>
<feature type="chain" id="PRO_0000262650" description="Tubulin beta-2A chain">
    <location>
        <begin position="1"/>
        <end position="445"/>
    </location>
</feature>
<feature type="region of interest" description="Disordered" evidence="9">
    <location>
        <begin position="422"/>
        <end position="445"/>
    </location>
</feature>
<feature type="short sequence motif" description="MREI motif" evidence="2">
    <location>
        <begin position="1"/>
        <end position="4"/>
    </location>
</feature>
<feature type="compositionally biased region" description="Acidic residues" evidence="9">
    <location>
        <begin position="429"/>
        <end position="445"/>
    </location>
</feature>
<feature type="binding site" evidence="5">
    <location>
        <position position="11"/>
    </location>
    <ligand>
        <name>GTP</name>
        <dbReference type="ChEBI" id="CHEBI:37565"/>
    </ligand>
</feature>
<feature type="binding site" evidence="3">
    <location>
        <position position="69"/>
    </location>
    <ligand>
        <name>GTP</name>
        <dbReference type="ChEBI" id="CHEBI:37565"/>
    </ligand>
</feature>
<feature type="binding site" evidence="3">
    <location>
        <position position="69"/>
    </location>
    <ligand>
        <name>Mg(2+)</name>
        <dbReference type="ChEBI" id="CHEBI:18420"/>
    </ligand>
</feature>
<feature type="binding site" evidence="5">
    <location>
        <position position="138"/>
    </location>
    <ligand>
        <name>GTP</name>
        <dbReference type="ChEBI" id="CHEBI:37565"/>
    </ligand>
</feature>
<feature type="binding site" evidence="5">
    <location>
        <position position="142"/>
    </location>
    <ligand>
        <name>GTP</name>
        <dbReference type="ChEBI" id="CHEBI:37565"/>
    </ligand>
</feature>
<feature type="binding site" evidence="5">
    <location>
        <position position="143"/>
    </location>
    <ligand>
        <name>GTP</name>
        <dbReference type="ChEBI" id="CHEBI:37565"/>
    </ligand>
</feature>
<feature type="binding site" evidence="5">
    <location>
        <position position="144"/>
    </location>
    <ligand>
        <name>GTP</name>
        <dbReference type="ChEBI" id="CHEBI:37565"/>
    </ligand>
</feature>
<feature type="binding site" evidence="5">
    <location>
        <position position="204"/>
    </location>
    <ligand>
        <name>GTP</name>
        <dbReference type="ChEBI" id="CHEBI:37565"/>
    </ligand>
</feature>
<feature type="binding site" evidence="5">
    <location>
        <position position="226"/>
    </location>
    <ligand>
        <name>GTP</name>
        <dbReference type="ChEBI" id="CHEBI:37565"/>
    </ligand>
</feature>
<feature type="modified residue" description="Phosphoserine" evidence="4">
    <location>
        <position position="40"/>
    </location>
</feature>
<feature type="modified residue" description="N6-acetyllysine; alternate" evidence="2">
    <location>
        <position position="58"/>
    </location>
</feature>
<feature type="modified residue" description="N6-succinyllysine; alternate" evidence="4">
    <location>
        <position position="58"/>
    </location>
</feature>
<feature type="modified residue" description="Phosphoserine; by CDK1" evidence="6">
    <location>
        <position position="172"/>
    </location>
</feature>
<feature type="modified residue" description="Phosphothreonine" evidence="2">
    <location>
        <position position="285"/>
    </location>
</feature>
<feature type="modified residue" description="Phosphothreonine" evidence="2">
    <location>
        <position position="290"/>
    </location>
</feature>
<feature type="modified residue" description="Omega-N-methylarginine" evidence="2">
    <location>
        <position position="318"/>
    </location>
</feature>
<feature type="modified residue" description="5-glutamyl polyglutamate" evidence="7">
    <location>
        <position position="438"/>
    </location>
</feature>
<feature type="cross-link" description="Glycyl lysine isopeptide (Lys-Gly) (interchain with G-Cter in ubiquitin); alternate" evidence="2">
    <location>
        <position position="58"/>
    </location>
</feature>
<feature type="cross-link" description="Glycyl lysine isopeptide (Lys-Gly) (interchain with G-Cter in ubiquitin)" evidence="2">
    <location>
        <position position="324"/>
    </location>
</feature>